<organism>
    <name type="scientific">Photobacterium profundum (strain SS9)</name>
    <dbReference type="NCBI Taxonomy" id="298386"/>
    <lineage>
        <taxon>Bacteria</taxon>
        <taxon>Pseudomonadati</taxon>
        <taxon>Pseudomonadota</taxon>
        <taxon>Gammaproteobacteria</taxon>
        <taxon>Vibrionales</taxon>
        <taxon>Vibrionaceae</taxon>
        <taxon>Photobacterium</taxon>
    </lineage>
</organism>
<sequence length="232" mass="24617">MKIGIIGAMEQEVTILKEQLTDCETHHKAGCIFYTGNLNGADVVLLQSGIGKVAAAVGTAVLLEAFQPDAVLNTGSAGGFDSSLTLGDVVISTEVRYHDADVTAFGYEIGQMAQQPAAFISDEKLILTAEQALASMADMHAVRGLICTGDAFVCTPEKQAFIRDNFPTVIAVEMEAAAIAQACHQFNVPFVVVRAISDVADKESPMSFEEFLPLAAQSSSVMVAKMVEILNQ</sequence>
<accession>Q6LUR4</accession>
<evidence type="ECO:0000255" key="1">
    <source>
        <dbReference type="HAMAP-Rule" id="MF_01684"/>
    </source>
</evidence>
<gene>
    <name evidence="1" type="primary">mtnN</name>
    <name type="ordered locus">PBPRA0538</name>
</gene>
<dbReference type="EC" id="3.2.2.9" evidence="1"/>
<dbReference type="EMBL" id="CR378664">
    <property type="protein sequence ID" value="CAG18961.1"/>
    <property type="molecule type" value="Genomic_DNA"/>
</dbReference>
<dbReference type="RefSeq" id="WP_011217314.1">
    <property type="nucleotide sequence ID" value="NC_006370.1"/>
</dbReference>
<dbReference type="SMR" id="Q6LUR4"/>
<dbReference type="STRING" id="298386.PBPRA0538"/>
<dbReference type="KEGG" id="ppr:PBPRA0538"/>
<dbReference type="eggNOG" id="COG0775">
    <property type="taxonomic scope" value="Bacteria"/>
</dbReference>
<dbReference type="HOGENOM" id="CLU_031248_2_2_6"/>
<dbReference type="UniPathway" id="UPA00904">
    <property type="reaction ID" value="UER00871"/>
</dbReference>
<dbReference type="Proteomes" id="UP000000593">
    <property type="component" value="Chromosome 1"/>
</dbReference>
<dbReference type="GO" id="GO:0005829">
    <property type="term" value="C:cytosol"/>
    <property type="evidence" value="ECO:0007669"/>
    <property type="project" value="TreeGrafter"/>
</dbReference>
<dbReference type="GO" id="GO:0008782">
    <property type="term" value="F:adenosylhomocysteine nucleosidase activity"/>
    <property type="evidence" value="ECO:0007669"/>
    <property type="project" value="UniProtKB-UniRule"/>
</dbReference>
<dbReference type="GO" id="GO:0008930">
    <property type="term" value="F:methylthioadenosine nucleosidase activity"/>
    <property type="evidence" value="ECO:0007669"/>
    <property type="project" value="UniProtKB-UniRule"/>
</dbReference>
<dbReference type="GO" id="GO:0019509">
    <property type="term" value="P:L-methionine salvage from methylthioadenosine"/>
    <property type="evidence" value="ECO:0007669"/>
    <property type="project" value="UniProtKB-UniRule"/>
</dbReference>
<dbReference type="GO" id="GO:0019284">
    <property type="term" value="P:L-methionine salvage from S-adenosylmethionine"/>
    <property type="evidence" value="ECO:0007669"/>
    <property type="project" value="TreeGrafter"/>
</dbReference>
<dbReference type="GO" id="GO:0009164">
    <property type="term" value="P:nucleoside catabolic process"/>
    <property type="evidence" value="ECO:0007669"/>
    <property type="project" value="InterPro"/>
</dbReference>
<dbReference type="CDD" id="cd09008">
    <property type="entry name" value="MTAN"/>
    <property type="match status" value="1"/>
</dbReference>
<dbReference type="FunFam" id="3.40.50.1580:FF:000001">
    <property type="entry name" value="MTA/SAH nucleosidase family protein"/>
    <property type="match status" value="1"/>
</dbReference>
<dbReference type="Gene3D" id="3.40.50.1580">
    <property type="entry name" value="Nucleoside phosphorylase domain"/>
    <property type="match status" value="1"/>
</dbReference>
<dbReference type="HAMAP" id="MF_01684">
    <property type="entry name" value="Salvage_MtnN"/>
    <property type="match status" value="1"/>
</dbReference>
<dbReference type="InterPro" id="IPR010049">
    <property type="entry name" value="MTA_SAH_Nsdase"/>
</dbReference>
<dbReference type="InterPro" id="IPR000845">
    <property type="entry name" value="Nucleoside_phosphorylase_d"/>
</dbReference>
<dbReference type="InterPro" id="IPR035994">
    <property type="entry name" value="Nucleoside_phosphorylase_sf"/>
</dbReference>
<dbReference type="NCBIfam" id="TIGR01704">
    <property type="entry name" value="MTA_SAH-Nsdase"/>
    <property type="match status" value="1"/>
</dbReference>
<dbReference type="NCBIfam" id="NF004079">
    <property type="entry name" value="PRK05584.1"/>
    <property type="match status" value="1"/>
</dbReference>
<dbReference type="PANTHER" id="PTHR46832">
    <property type="entry name" value="5'-METHYLTHIOADENOSINE/S-ADENOSYLHOMOCYSTEINE NUCLEOSIDASE"/>
    <property type="match status" value="1"/>
</dbReference>
<dbReference type="PANTHER" id="PTHR46832:SF1">
    <property type="entry name" value="5'-METHYLTHIOADENOSINE_S-ADENOSYLHOMOCYSTEINE NUCLEOSIDASE"/>
    <property type="match status" value="1"/>
</dbReference>
<dbReference type="Pfam" id="PF01048">
    <property type="entry name" value="PNP_UDP_1"/>
    <property type="match status" value="1"/>
</dbReference>
<dbReference type="SUPFAM" id="SSF53167">
    <property type="entry name" value="Purine and uridine phosphorylases"/>
    <property type="match status" value="1"/>
</dbReference>
<proteinExistence type="inferred from homology"/>
<comment type="function">
    <text evidence="1">Catalyzes the irreversible cleavage of the glycosidic bond in both 5'-methylthioadenosine (MTA) and S-adenosylhomocysteine (SAH/AdoHcy) to adenine and the corresponding thioribose, 5'-methylthioribose and S-ribosylhomocysteine, respectively. Also cleaves 5'-deoxyadenosine, a toxic by-product of radical S-adenosylmethionine (SAM) enzymes, into 5-deoxyribose and adenine.</text>
</comment>
<comment type="catalytic activity">
    <reaction evidence="1">
        <text>S-adenosyl-L-homocysteine + H2O = S-(5-deoxy-D-ribos-5-yl)-L-homocysteine + adenine</text>
        <dbReference type="Rhea" id="RHEA:17805"/>
        <dbReference type="ChEBI" id="CHEBI:15377"/>
        <dbReference type="ChEBI" id="CHEBI:16708"/>
        <dbReference type="ChEBI" id="CHEBI:57856"/>
        <dbReference type="ChEBI" id="CHEBI:58195"/>
        <dbReference type="EC" id="3.2.2.9"/>
    </reaction>
</comment>
<comment type="catalytic activity">
    <reaction evidence="1">
        <text>S-methyl-5'-thioadenosine + H2O = 5-(methylsulfanyl)-D-ribose + adenine</text>
        <dbReference type="Rhea" id="RHEA:13617"/>
        <dbReference type="ChEBI" id="CHEBI:15377"/>
        <dbReference type="ChEBI" id="CHEBI:16708"/>
        <dbReference type="ChEBI" id="CHEBI:17509"/>
        <dbReference type="ChEBI" id="CHEBI:78440"/>
        <dbReference type="EC" id="3.2.2.9"/>
    </reaction>
</comment>
<comment type="catalytic activity">
    <reaction evidence="1">
        <text>5'-deoxyadenosine + H2O = 5-deoxy-D-ribose + adenine</text>
        <dbReference type="Rhea" id="RHEA:29859"/>
        <dbReference type="ChEBI" id="CHEBI:15377"/>
        <dbReference type="ChEBI" id="CHEBI:16708"/>
        <dbReference type="ChEBI" id="CHEBI:17319"/>
        <dbReference type="ChEBI" id="CHEBI:149540"/>
        <dbReference type="EC" id="3.2.2.9"/>
    </reaction>
    <physiologicalReaction direction="left-to-right" evidence="1">
        <dbReference type="Rhea" id="RHEA:29860"/>
    </physiologicalReaction>
</comment>
<comment type="pathway">
    <text evidence="1">Amino-acid biosynthesis; L-methionine biosynthesis via salvage pathway; S-methyl-5-thio-alpha-D-ribose 1-phosphate from S-methyl-5'-thioadenosine (hydrolase route): step 1/2.</text>
</comment>
<comment type="similarity">
    <text evidence="1">Belongs to the PNP/UDP phosphorylase family. MtnN subfamily.</text>
</comment>
<keyword id="KW-0028">Amino-acid biosynthesis</keyword>
<keyword id="KW-0378">Hydrolase</keyword>
<keyword id="KW-0486">Methionine biosynthesis</keyword>
<keyword id="KW-1185">Reference proteome</keyword>
<reference key="1">
    <citation type="journal article" date="2005" name="Science">
        <title>Life at depth: Photobacterium profundum genome sequence and expression analysis.</title>
        <authorList>
            <person name="Vezzi A."/>
            <person name="Campanaro S."/>
            <person name="D'Angelo M."/>
            <person name="Simonato F."/>
            <person name="Vitulo N."/>
            <person name="Lauro F.M."/>
            <person name="Cestaro A."/>
            <person name="Malacrida G."/>
            <person name="Simionati B."/>
            <person name="Cannata N."/>
            <person name="Romualdi C."/>
            <person name="Bartlett D.H."/>
            <person name="Valle G."/>
        </authorList>
    </citation>
    <scope>NUCLEOTIDE SEQUENCE [LARGE SCALE GENOMIC DNA]</scope>
    <source>
        <strain>ATCC BAA-1253 / SS9</strain>
    </source>
</reference>
<feature type="chain" id="PRO_0000359321" description="5'-methylthioadenosine/S-adenosylhomocysteine nucleosidase">
    <location>
        <begin position="1"/>
        <end position="232"/>
    </location>
</feature>
<feature type="active site" description="Proton acceptor" evidence="1">
    <location>
        <position position="12"/>
    </location>
</feature>
<feature type="active site" description="Proton donor" evidence="1">
    <location>
        <position position="198"/>
    </location>
</feature>
<feature type="binding site" evidence="1">
    <location>
        <position position="78"/>
    </location>
    <ligand>
        <name>substrate</name>
    </ligand>
</feature>
<feature type="binding site" evidence="1">
    <location>
        <position position="153"/>
    </location>
    <ligand>
        <name>substrate</name>
    </ligand>
</feature>
<feature type="binding site" evidence="1">
    <location>
        <begin position="174"/>
        <end position="175"/>
    </location>
    <ligand>
        <name>substrate</name>
    </ligand>
</feature>
<name>MTNN_PHOPR</name>
<protein>
    <recommendedName>
        <fullName evidence="1">5'-methylthioadenosine/S-adenosylhomocysteine nucleosidase</fullName>
        <shortName evidence="1">MTA/SAH nucleosidase</shortName>
        <shortName evidence="1">MTAN</shortName>
        <ecNumber evidence="1">3.2.2.9</ecNumber>
    </recommendedName>
    <alternativeName>
        <fullName evidence="1">5'-deoxyadenosine nucleosidase</fullName>
        <shortName evidence="1">DOA nucleosidase</shortName>
        <shortName evidence="1">dAdo nucleosidase</shortName>
    </alternativeName>
    <alternativeName>
        <fullName evidence="1">5'-methylthioadenosine nucleosidase</fullName>
        <shortName evidence="1">MTA nucleosidase</shortName>
    </alternativeName>
    <alternativeName>
        <fullName evidence="1">S-adenosylhomocysteine nucleosidase</fullName>
        <shortName evidence="1">AdoHcy nucleosidase</shortName>
        <shortName evidence="1">SAH nucleosidase</shortName>
        <shortName evidence="1">SRH nucleosidase</shortName>
    </alternativeName>
</protein>